<gene>
    <name type="primary">EAF6</name>
    <name type="ordered locus">YALI0E13079g</name>
</gene>
<feature type="chain" id="PRO_0000086900" description="Chromatin modification-related protein EAF6">
    <location>
        <begin position="1"/>
        <end position="135"/>
    </location>
</feature>
<feature type="region of interest" description="Disordered" evidence="3">
    <location>
        <begin position="92"/>
        <end position="135"/>
    </location>
</feature>
<feature type="coiled-coil region" evidence="2">
    <location>
        <begin position="1"/>
        <end position="42"/>
    </location>
</feature>
<feature type="compositionally biased region" description="Basic and acidic residues" evidence="3">
    <location>
        <begin position="124"/>
        <end position="135"/>
    </location>
</feature>
<proteinExistence type="inferred from homology"/>
<comment type="function">
    <text evidence="1">Component of the NuA4 histone acetyltransferase complex which is involved in transcriptional activation of selected genes principally by acetylation of nucleosomal histone H4 and H2A. The NuA4 complex is also involved in DNA repair (By similarity).</text>
</comment>
<comment type="subunit">
    <text evidence="1">Component of the NuA4 histone acetyltransferase complex.</text>
</comment>
<comment type="subcellular location">
    <subcellularLocation>
        <location evidence="1">Nucleus</location>
    </subcellularLocation>
</comment>
<comment type="similarity">
    <text evidence="4">Belongs to the EAF6 family.</text>
</comment>
<protein>
    <recommendedName>
        <fullName>Chromatin modification-related protein EAF6</fullName>
    </recommendedName>
</protein>
<sequence>MSDQKMNQYEKLKKQLKDNINKKKTHDKNLNSLEEQIFTLEGAYLEETSHGNLVKGFDTYIKGAQSKKRYVFNEDDRLFSLSSAVFLKHQAKTGAGGDLDETKNERKKTASQKRRKGDSTPMSGDEKPSKRSRVD</sequence>
<accession>Q6C626</accession>
<keyword id="KW-0156">Chromatin regulator</keyword>
<keyword id="KW-0175">Coiled coil</keyword>
<keyword id="KW-0227">DNA damage</keyword>
<keyword id="KW-0234">DNA repair</keyword>
<keyword id="KW-0539">Nucleus</keyword>
<keyword id="KW-1185">Reference proteome</keyword>
<keyword id="KW-0804">Transcription</keyword>
<keyword id="KW-0805">Transcription regulation</keyword>
<reference key="1">
    <citation type="journal article" date="2004" name="Nature">
        <title>Genome evolution in yeasts.</title>
        <authorList>
            <person name="Dujon B."/>
            <person name="Sherman D."/>
            <person name="Fischer G."/>
            <person name="Durrens P."/>
            <person name="Casaregola S."/>
            <person name="Lafontaine I."/>
            <person name="de Montigny J."/>
            <person name="Marck C."/>
            <person name="Neuveglise C."/>
            <person name="Talla E."/>
            <person name="Goffard N."/>
            <person name="Frangeul L."/>
            <person name="Aigle M."/>
            <person name="Anthouard V."/>
            <person name="Babour A."/>
            <person name="Barbe V."/>
            <person name="Barnay S."/>
            <person name="Blanchin S."/>
            <person name="Beckerich J.-M."/>
            <person name="Beyne E."/>
            <person name="Bleykasten C."/>
            <person name="Boisrame A."/>
            <person name="Boyer J."/>
            <person name="Cattolico L."/>
            <person name="Confanioleri F."/>
            <person name="de Daruvar A."/>
            <person name="Despons L."/>
            <person name="Fabre E."/>
            <person name="Fairhead C."/>
            <person name="Ferry-Dumazet H."/>
            <person name="Groppi A."/>
            <person name="Hantraye F."/>
            <person name="Hennequin C."/>
            <person name="Jauniaux N."/>
            <person name="Joyet P."/>
            <person name="Kachouri R."/>
            <person name="Kerrest A."/>
            <person name="Koszul R."/>
            <person name="Lemaire M."/>
            <person name="Lesur I."/>
            <person name="Ma L."/>
            <person name="Muller H."/>
            <person name="Nicaud J.-M."/>
            <person name="Nikolski M."/>
            <person name="Oztas S."/>
            <person name="Ozier-Kalogeropoulos O."/>
            <person name="Pellenz S."/>
            <person name="Potier S."/>
            <person name="Richard G.-F."/>
            <person name="Straub M.-L."/>
            <person name="Suleau A."/>
            <person name="Swennen D."/>
            <person name="Tekaia F."/>
            <person name="Wesolowski-Louvel M."/>
            <person name="Westhof E."/>
            <person name="Wirth B."/>
            <person name="Zeniou-Meyer M."/>
            <person name="Zivanovic Y."/>
            <person name="Bolotin-Fukuhara M."/>
            <person name="Thierry A."/>
            <person name="Bouchier C."/>
            <person name="Caudron B."/>
            <person name="Scarpelli C."/>
            <person name="Gaillardin C."/>
            <person name="Weissenbach J."/>
            <person name="Wincker P."/>
            <person name="Souciet J.-L."/>
        </authorList>
    </citation>
    <scope>NUCLEOTIDE SEQUENCE [LARGE SCALE GENOMIC DNA]</scope>
    <source>
        <strain>CLIB 122 / E 150</strain>
    </source>
</reference>
<name>EAF6_YARLI</name>
<dbReference type="EMBL" id="CR382131">
    <property type="protein sequence ID" value="CAG79479.1"/>
    <property type="molecule type" value="Genomic_DNA"/>
</dbReference>
<dbReference type="RefSeq" id="XP_503886.1">
    <property type="nucleotide sequence ID" value="XM_503886.1"/>
</dbReference>
<dbReference type="SMR" id="Q6C626"/>
<dbReference type="FunCoup" id="Q6C626">
    <property type="interactions" value="87"/>
</dbReference>
<dbReference type="STRING" id="284591.Q6C626"/>
<dbReference type="EnsemblFungi" id="CAG79479">
    <property type="protein sequence ID" value="CAG79479"/>
    <property type="gene ID" value="YALI0_E13079g"/>
</dbReference>
<dbReference type="KEGG" id="yli:2912017"/>
<dbReference type="VEuPathDB" id="FungiDB:YALI0_E13079g"/>
<dbReference type="HOGENOM" id="CLU_093901_2_1_1"/>
<dbReference type="InParanoid" id="Q6C626"/>
<dbReference type="OMA" id="IEVQIYN"/>
<dbReference type="OrthoDB" id="93235at4891"/>
<dbReference type="Proteomes" id="UP000001300">
    <property type="component" value="Chromosome E"/>
</dbReference>
<dbReference type="GO" id="GO:0035267">
    <property type="term" value="C:NuA4 histone acetyltransferase complex"/>
    <property type="evidence" value="ECO:0000318"/>
    <property type="project" value="GO_Central"/>
</dbReference>
<dbReference type="GO" id="GO:0005634">
    <property type="term" value="C:nucleus"/>
    <property type="evidence" value="ECO:0007669"/>
    <property type="project" value="UniProtKB-SubCell"/>
</dbReference>
<dbReference type="GO" id="GO:0006325">
    <property type="term" value="P:chromatin organization"/>
    <property type="evidence" value="ECO:0007669"/>
    <property type="project" value="UniProtKB-KW"/>
</dbReference>
<dbReference type="GO" id="GO:0006281">
    <property type="term" value="P:DNA repair"/>
    <property type="evidence" value="ECO:0007669"/>
    <property type="project" value="UniProtKB-KW"/>
</dbReference>
<dbReference type="InterPro" id="IPR015418">
    <property type="entry name" value="Eaf6"/>
</dbReference>
<dbReference type="PANTHER" id="PTHR13476">
    <property type="entry name" value="CHROMATIN MODIFICATION-RELATED PROTEIN MEAF6"/>
    <property type="match status" value="1"/>
</dbReference>
<dbReference type="Pfam" id="PF09340">
    <property type="entry name" value="NuA4"/>
    <property type="match status" value="1"/>
</dbReference>
<organism>
    <name type="scientific">Yarrowia lipolytica (strain CLIB 122 / E 150)</name>
    <name type="common">Yeast</name>
    <name type="synonym">Candida lipolytica</name>
    <dbReference type="NCBI Taxonomy" id="284591"/>
    <lineage>
        <taxon>Eukaryota</taxon>
        <taxon>Fungi</taxon>
        <taxon>Dikarya</taxon>
        <taxon>Ascomycota</taxon>
        <taxon>Saccharomycotina</taxon>
        <taxon>Dipodascomycetes</taxon>
        <taxon>Dipodascales</taxon>
        <taxon>Dipodascales incertae sedis</taxon>
        <taxon>Yarrowia</taxon>
    </lineage>
</organism>
<evidence type="ECO:0000250" key="1"/>
<evidence type="ECO:0000255" key="2"/>
<evidence type="ECO:0000256" key="3">
    <source>
        <dbReference type="SAM" id="MobiDB-lite"/>
    </source>
</evidence>
<evidence type="ECO:0000305" key="4"/>